<evidence type="ECO:0000250" key="1">
    <source>
        <dbReference type="UniProtKB" id="P09413"/>
    </source>
</evidence>
<evidence type="ECO:0000269" key="2">
    <source>
    </source>
</evidence>
<evidence type="ECO:0000303" key="3">
    <source>
    </source>
</evidence>
<evidence type="ECO:0000305" key="4"/>
<accession>P81000</accession>
<protein>
    <recommendedName>
        <fullName evidence="3">Gas vesicle protein C</fullName>
        <shortName>GvpC</shortName>
    </recommendedName>
</protein>
<reference key="1">
    <citation type="journal article" date="1992" name="J. Gen. Microbiol.">
        <title>The homologies of gas vesicle proteins.</title>
        <authorList>
            <person name="Griffiths A.E."/>
            <person name="Walsby A.E."/>
            <person name="Hayes P.K."/>
        </authorList>
    </citation>
    <scope>PROTEIN SEQUENCE</scope>
    <scope>SUBCELLULAR LOCATION</scope>
    <source>
        <strain>CCAP 1475/10</strain>
    </source>
</reference>
<dbReference type="GO" id="GO:0031411">
    <property type="term" value="C:gas vesicle"/>
    <property type="evidence" value="ECO:0007669"/>
    <property type="project" value="UniProtKB-SubCell"/>
</dbReference>
<comment type="function">
    <text evidence="1">Confers stability, involved in shaping gas vesicles, hollow, gas filled proteinaceous nanostructures. During planktonic growth they allow positioning of the organism at a favorable depth for light or nutrient acquisition.</text>
</comment>
<comment type="subcellular location">
    <subcellularLocation>
        <location evidence="2">Gas vesicle</location>
    </subcellularLocation>
    <text evidence="2">Binds to the external surface of the gas vesicle.</text>
</comment>
<comment type="similarity">
    <text evidence="4">Belongs to the gas vesicle GvpC family.</text>
</comment>
<sequence length="39" mass="4492">ALQDDWQQSHLERRQVLAESQKQIQATIGALXXERQXXA</sequence>
<name>GVPC_SPICC</name>
<organism>
    <name type="scientific">Spirulina sp. (strain CCAP 1475/10)</name>
    <dbReference type="NCBI Taxonomy" id="69016"/>
    <lineage>
        <taxon>Bacteria</taxon>
        <taxon>Bacillati</taxon>
        <taxon>Cyanobacteriota</taxon>
        <taxon>Cyanophyceae</taxon>
        <taxon>Spirulinales</taxon>
        <taxon>Spirulinaceae</taxon>
        <taxon>Spirulina</taxon>
    </lineage>
</organism>
<gene>
    <name evidence="3" type="primary">gvpC</name>
</gene>
<keyword id="KW-0903">Direct protein sequencing</keyword>
<keyword id="KW-0304">Gas vesicle</keyword>
<feature type="chain" id="PRO_0000182668" description="Gas vesicle protein C">
    <location>
        <begin position="1" status="less than"/>
        <end position="39" status="greater than"/>
    </location>
</feature>
<feature type="non-terminal residue">
    <location>
        <position position="1"/>
    </location>
</feature>
<feature type="non-terminal residue">
    <location>
        <position position="39"/>
    </location>
</feature>
<proteinExistence type="evidence at protein level"/>